<feature type="chain" id="PRO_0000184497" description="1-aminocyclopropane-1-carboxylate deaminase">
    <location>
        <begin position="1"/>
        <end position="337"/>
    </location>
</feature>
<feature type="active site" description="Nucleophile" evidence="1">
    <location>
        <position position="77"/>
    </location>
</feature>
<feature type="modified residue" description="N6-(pyridoxal phosphate)lysine" evidence="1">
    <location>
        <position position="50"/>
    </location>
</feature>
<organism>
    <name type="scientific">Bradyrhizobium diazoefficiens (strain JCM 10833 / BCRC 13528 / IAM 13628 / NBRC 14792 / USDA 110)</name>
    <dbReference type="NCBI Taxonomy" id="224911"/>
    <lineage>
        <taxon>Bacteria</taxon>
        <taxon>Pseudomonadati</taxon>
        <taxon>Pseudomonadota</taxon>
        <taxon>Alphaproteobacteria</taxon>
        <taxon>Hyphomicrobiales</taxon>
        <taxon>Nitrobacteraceae</taxon>
        <taxon>Bradyrhizobium</taxon>
    </lineage>
</organism>
<evidence type="ECO:0000255" key="1">
    <source>
        <dbReference type="HAMAP-Rule" id="MF_00807"/>
    </source>
</evidence>
<accession>Q89XR6</accession>
<comment type="function">
    <text evidence="1">Catalyzes a cyclopropane ring-opening reaction, the irreversible conversion of 1-aminocyclopropane-1-carboxylate (ACC) to ammonia and alpha-ketobutyrate. Allows growth on ACC as a nitrogen source.</text>
</comment>
<comment type="catalytic activity">
    <reaction evidence="1">
        <text>1-aminocyclopropane-1-carboxylate + H2O = 2-oxobutanoate + NH4(+)</text>
        <dbReference type="Rhea" id="RHEA:16933"/>
        <dbReference type="ChEBI" id="CHEBI:15377"/>
        <dbReference type="ChEBI" id="CHEBI:16763"/>
        <dbReference type="ChEBI" id="CHEBI:28938"/>
        <dbReference type="ChEBI" id="CHEBI:58360"/>
        <dbReference type="EC" id="3.5.99.7"/>
    </reaction>
</comment>
<comment type="cofactor">
    <cofactor evidence="1">
        <name>pyridoxal 5'-phosphate</name>
        <dbReference type="ChEBI" id="CHEBI:597326"/>
    </cofactor>
</comment>
<comment type="subunit">
    <text evidence="1">Homotrimer.</text>
</comment>
<comment type="similarity">
    <text evidence="1">Belongs to the ACC deaminase/D-cysteine desulfhydrase family.</text>
</comment>
<reference key="1">
    <citation type="journal article" date="2002" name="DNA Res.">
        <title>Complete genomic sequence of nitrogen-fixing symbiotic bacterium Bradyrhizobium japonicum USDA110.</title>
        <authorList>
            <person name="Kaneko T."/>
            <person name="Nakamura Y."/>
            <person name="Sato S."/>
            <person name="Minamisawa K."/>
            <person name="Uchiumi T."/>
            <person name="Sasamoto S."/>
            <person name="Watanabe A."/>
            <person name="Idesawa K."/>
            <person name="Iriguchi M."/>
            <person name="Kawashima K."/>
            <person name="Kohara M."/>
            <person name="Matsumoto M."/>
            <person name="Shimpo S."/>
            <person name="Tsuruoka H."/>
            <person name="Wada T."/>
            <person name="Yamada M."/>
            <person name="Tabata S."/>
        </authorList>
    </citation>
    <scope>NUCLEOTIDE SEQUENCE [LARGE SCALE GENOMIC DNA]</scope>
    <source>
        <strain>JCM 10833 / BCRC 13528 / IAM 13628 / NBRC 14792 / USDA 110</strain>
    </source>
</reference>
<dbReference type="EC" id="3.5.99.7" evidence="1"/>
<dbReference type="EMBL" id="BA000040">
    <property type="protein sequence ID" value="BAC45506.1"/>
    <property type="molecule type" value="Genomic_DNA"/>
</dbReference>
<dbReference type="RefSeq" id="NP_766881.1">
    <property type="nucleotide sequence ID" value="NC_004463.1"/>
</dbReference>
<dbReference type="RefSeq" id="WP_011083073.1">
    <property type="nucleotide sequence ID" value="NC_004463.1"/>
</dbReference>
<dbReference type="SMR" id="Q89XR6"/>
<dbReference type="FunCoup" id="Q89XR6">
    <property type="interactions" value="402"/>
</dbReference>
<dbReference type="STRING" id="224911.AAV28_40450"/>
<dbReference type="EnsemblBacteria" id="BAC45506">
    <property type="protein sequence ID" value="BAC45506"/>
    <property type="gene ID" value="BAC45506"/>
</dbReference>
<dbReference type="GeneID" id="46495392"/>
<dbReference type="KEGG" id="bja:blr0241"/>
<dbReference type="PATRIC" id="fig|224911.44.peg.8761"/>
<dbReference type="eggNOG" id="COG2515">
    <property type="taxonomic scope" value="Bacteria"/>
</dbReference>
<dbReference type="HOGENOM" id="CLU_048897_2_1_5"/>
<dbReference type="InParanoid" id="Q89XR6"/>
<dbReference type="OrthoDB" id="9801249at2"/>
<dbReference type="PhylomeDB" id="Q89XR6"/>
<dbReference type="BRENDA" id="3.5.99.7">
    <property type="organism ID" value="929"/>
</dbReference>
<dbReference type="Proteomes" id="UP000002526">
    <property type="component" value="Chromosome"/>
</dbReference>
<dbReference type="GO" id="GO:0008660">
    <property type="term" value="F:1-aminocyclopropane-1-carboxylate deaminase activity"/>
    <property type="evidence" value="ECO:0007669"/>
    <property type="project" value="UniProtKB-UniRule"/>
</dbReference>
<dbReference type="GO" id="GO:0019148">
    <property type="term" value="F:D-cysteine desulfhydrase activity"/>
    <property type="evidence" value="ECO:0000318"/>
    <property type="project" value="GO_Central"/>
</dbReference>
<dbReference type="GO" id="GO:0030170">
    <property type="term" value="F:pyridoxal phosphate binding"/>
    <property type="evidence" value="ECO:0007669"/>
    <property type="project" value="InterPro"/>
</dbReference>
<dbReference type="GO" id="GO:0018871">
    <property type="term" value="P:1-aminocyclopropane-1-carboxylate metabolic process"/>
    <property type="evidence" value="ECO:0007669"/>
    <property type="project" value="UniProtKB-UniRule"/>
</dbReference>
<dbReference type="GO" id="GO:0009310">
    <property type="term" value="P:amine catabolic process"/>
    <property type="evidence" value="ECO:0007669"/>
    <property type="project" value="InterPro"/>
</dbReference>
<dbReference type="CDD" id="cd06449">
    <property type="entry name" value="ACCD"/>
    <property type="match status" value="1"/>
</dbReference>
<dbReference type="FunFam" id="3.40.50.1100:FF:000048">
    <property type="entry name" value="1-aminocyclopropane-1-carboxylate deaminase"/>
    <property type="match status" value="1"/>
</dbReference>
<dbReference type="Gene3D" id="3.40.50.1100">
    <property type="match status" value="2"/>
</dbReference>
<dbReference type="HAMAP" id="MF_00807">
    <property type="entry name" value="ACC_deaminase"/>
    <property type="match status" value="1"/>
</dbReference>
<dbReference type="InterPro" id="IPR027278">
    <property type="entry name" value="ACCD_DCysDesulf"/>
</dbReference>
<dbReference type="InterPro" id="IPR005965">
    <property type="entry name" value="ACP_carboxylate_deaminase"/>
</dbReference>
<dbReference type="InterPro" id="IPR020601">
    <property type="entry name" value="ACP_carboxylate_deaminase_bac"/>
</dbReference>
<dbReference type="InterPro" id="IPR001926">
    <property type="entry name" value="TrpB-like_PALP"/>
</dbReference>
<dbReference type="InterPro" id="IPR036052">
    <property type="entry name" value="TrpB-like_PALP_sf"/>
</dbReference>
<dbReference type="NCBIfam" id="TIGR01274">
    <property type="entry name" value="ACC_deam"/>
    <property type="match status" value="1"/>
</dbReference>
<dbReference type="PANTHER" id="PTHR43780">
    <property type="entry name" value="1-AMINOCYCLOPROPANE-1-CARBOXYLATE DEAMINASE-RELATED"/>
    <property type="match status" value="1"/>
</dbReference>
<dbReference type="PANTHER" id="PTHR43780:SF2">
    <property type="entry name" value="1-AMINOCYCLOPROPANE-1-CARBOXYLATE DEAMINASE-RELATED"/>
    <property type="match status" value="1"/>
</dbReference>
<dbReference type="Pfam" id="PF00291">
    <property type="entry name" value="PALP"/>
    <property type="match status" value="1"/>
</dbReference>
<dbReference type="PIRSF" id="PIRSF006278">
    <property type="entry name" value="ACCD_DCysDesulf"/>
    <property type="match status" value="1"/>
</dbReference>
<dbReference type="SUPFAM" id="SSF53686">
    <property type="entry name" value="Tryptophan synthase beta subunit-like PLP-dependent enzymes"/>
    <property type="match status" value="1"/>
</dbReference>
<protein>
    <recommendedName>
        <fullName evidence="1">1-aminocyclopropane-1-carboxylate deaminase</fullName>
        <shortName evidence="1">ACC deaminase</shortName>
        <shortName evidence="1">ACCD</shortName>
        <ecNumber evidence="1">3.5.99.7</ecNumber>
    </recommendedName>
</protein>
<sequence length="337" mass="36432">MLEKFARYPLTFGPTPIEKLERLSKHLGGNVEIYAKREDCNSGLAYGGNKLRKLEYIIPDAIASNADTLVSIGGVQSNHTRMIAAVAAKIGMKCRLVQEAWVPHEDAVYDRVGNIMLSRIMGADVRLVDDGFDIGIRKSWEQAIEEVKAAGGKPYAIPAGASVHKYGGLGYVGFAEEVRKQEAELGFKFDYIVVCTVTGSTHAGMLVGFAADGRARKVIGIDGSFTPAQTKAQVLSIAQNTAKLVELGKDIVADDVVLIEDYAYPAYGVPSEETKEAIRLTARLEAMITDPVYEGKSMQGLIDLTQKGYFEKGAKVLYAHLGGAPALNGYGYAFRNG</sequence>
<name>1A1D_BRADU</name>
<proteinExistence type="inferred from homology"/>
<keyword id="KW-0378">Hydrolase</keyword>
<keyword id="KW-0663">Pyridoxal phosphate</keyword>
<keyword id="KW-1185">Reference proteome</keyword>
<gene>
    <name evidence="1" type="primary">acdS</name>
    <name type="ordered locus">blr0241</name>
</gene>